<sequence length="507" mass="55364">MVTIQADEISNLIRERIEQYNREVNIVNTGTVLQVGDGIARIYGLDEVMAGELVEFEEGTIGIALNLESKNVGVVLMGDGLMIQEGSSVKATARIAQIPVGEAYLGRVINALANPIDGRGEISASGFRLIESPAPGIISRRSVYEPLQTGLIAIDSMIPIGRGQRELIIGDRQTGKTAVATDTILNQQGQNVICVYVAIGQKASSVAQVVNTLQERGAMEYTIVVAETADSPATLQYLAPYTGAALAEYFMYRERHTLIIYDDLSKQAQAYRQMSLLLRRPPGREAYPGDVFYLHSRLLERAAKSSSKLGEGSMTALPIVETQSGDVSAYIPTNVISITDGQIFLSADLFNAGIRPAINVGISVSRVGSAAQIKAMKQVAGKLKLELAQFAELEAFAQFASDLDKASQNQLARGQRLRELLKQSQSAPLTVAEQIITIFTGINGYLDSLELGQVKKFIVELRTYLKTNKPRFEEIISSTKIFTEEAEALLKEAIRDQMDRFLLQQQV</sequence>
<protein>
    <recommendedName>
        <fullName evidence="1">ATP synthase subunit alpha, chloroplastic</fullName>
        <ecNumber evidence="1">7.1.2.2</ecNumber>
    </recommendedName>
    <alternativeName>
        <fullName evidence="1">ATP synthase F1 sector subunit alpha</fullName>
    </alternativeName>
    <alternativeName>
        <fullName evidence="1">F-ATPase subunit alpha</fullName>
    </alternativeName>
</protein>
<geneLocation type="chloroplast"/>
<feature type="chain" id="PRO_0000339090" description="ATP synthase subunit alpha, chloroplastic">
    <location>
        <begin position="1"/>
        <end position="507"/>
    </location>
</feature>
<feature type="binding site" evidence="1">
    <location>
        <begin position="170"/>
        <end position="177"/>
    </location>
    <ligand>
        <name>ATP</name>
        <dbReference type="ChEBI" id="CHEBI:30616"/>
    </ligand>
</feature>
<feature type="site" description="Required for activity" evidence="1">
    <location>
        <position position="363"/>
    </location>
</feature>
<accession>A7Y3A4</accession>
<keyword id="KW-0066">ATP synthesis</keyword>
<keyword id="KW-0067">ATP-binding</keyword>
<keyword id="KW-0139">CF(1)</keyword>
<keyword id="KW-0150">Chloroplast</keyword>
<keyword id="KW-0375">Hydrogen ion transport</keyword>
<keyword id="KW-0406">Ion transport</keyword>
<keyword id="KW-0472">Membrane</keyword>
<keyword id="KW-0547">Nucleotide-binding</keyword>
<keyword id="KW-0934">Plastid</keyword>
<keyword id="KW-0793">Thylakoid</keyword>
<keyword id="KW-1278">Translocase</keyword>
<keyword id="KW-0813">Transport</keyword>
<proteinExistence type="inferred from homology"/>
<reference key="1">
    <citation type="journal article" date="2007" name="BMC Plant Biol.">
        <title>Complete plastid genome sequences suggest strong selection for retention of photosynthetic genes in the parasitic plant genus Cuscuta.</title>
        <authorList>
            <person name="McNeal J.R."/>
            <person name="Kuehl J.V."/>
            <person name="Boore J.L."/>
            <person name="dePamphilis C.W."/>
        </authorList>
    </citation>
    <scope>NUCLEOTIDE SEQUENCE [LARGE SCALE GENOMIC DNA]</scope>
</reference>
<comment type="function">
    <text evidence="1">Produces ATP from ADP in the presence of a proton gradient across the membrane. The alpha chain is a regulatory subunit.</text>
</comment>
<comment type="catalytic activity">
    <reaction evidence="1">
        <text>ATP + H2O + 4 H(+)(in) = ADP + phosphate + 5 H(+)(out)</text>
        <dbReference type="Rhea" id="RHEA:57720"/>
        <dbReference type="ChEBI" id="CHEBI:15377"/>
        <dbReference type="ChEBI" id="CHEBI:15378"/>
        <dbReference type="ChEBI" id="CHEBI:30616"/>
        <dbReference type="ChEBI" id="CHEBI:43474"/>
        <dbReference type="ChEBI" id="CHEBI:456216"/>
        <dbReference type="EC" id="7.1.2.2"/>
    </reaction>
</comment>
<comment type="subunit">
    <text evidence="1">F-type ATPases have 2 components, CF(1) - the catalytic core - and CF(0) - the membrane proton channel. CF(1) has five subunits: alpha(3), beta(3), gamma(1), delta(1), epsilon(1). CF(0) has four main subunits: a, b, b' and c.</text>
</comment>
<comment type="subcellular location">
    <subcellularLocation>
        <location evidence="1">Plastid</location>
        <location evidence="1">Chloroplast thylakoid membrane</location>
        <topology evidence="1">Peripheral membrane protein</topology>
    </subcellularLocation>
</comment>
<comment type="similarity">
    <text evidence="1">Belongs to the ATPase alpha/beta chains family.</text>
</comment>
<name>ATPA_IPOPU</name>
<evidence type="ECO:0000255" key="1">
    <source>
        <dbReference type="HAMAP-Rule" id="MF_01346"/>
    </source>
</evidence>
<dbReference type="EC" id="7.1.2.2" evidence="1"/>
<dbReference type="EMBL" id="EU118126">
    <property type="protein sequence ID" value="ABV02333.1"/>
    <property type="molecule type" value="Genomic_DNA"/>
</dbReference>
<dbReference type="RefSeq" id="YP_001468293.1">
    <property type="nucleotide sequence ID" value="NC_009808.1"/>
</dbReference>
<dbReference type="SMR" id="A7Y3A4"/>
<dbReference type="GeneID" id="5601248"/>
<dbReference type="GO" id="GO:0009535">
    <property type="term" value="C:chloroplast thylakoid membrane"/>
    <property type="evidence" value="ECO:0007669"/>
    <property type="project" value="UniProtKB-SubCell"/>
</dbReference>
<dbReference type="GO" id="GO:0045259">
    <property type="term" value="C:proton-transporting ATP synthase complex"/>
    <property type="evidence" value="ECO:0007669"/>
    <property type="project" value="UniProtKB-KW"/>
</dbReference>
<dbReference type="GO" id="GO:0043531">
    <property type="term" value="F:ADP binding"/>
    <property type="evidence" value="ECO:0007669"/>
    <property type="project" value="TreeGrafter"/>
</dbReference>
<dbReference type="GO" id="GO:0005524">
    <property type="term" value="F:ATP binding"/>
    <property type="evidence" value="ECO:0007669"/>
    <property type="project" value="UniProtKB-UniRule"/>
</dbReference>
<dbReference type="GO" id="GO:0046933">
    <property type="term" value="F:proton-transporting ATP synthase activity, rotational mechanism"/>
    <property type="evidence" value="ECO:0007669"/>
    <property type="project" value="UniProtKB-UniRule"/>
</dbReference>
<dbReference type="CDD" id="cd18113">
    <property type="entry name" value="ATP-synt_F1_alpha_C"/>
    <property type="match status" value="1"/>
</dbReference>
<dbReference type="CDD" id="cd18116">
    <property type="entry name" value="ATP-synt_F1_alpha_N"/>
    <property type="match status" value="1"/>
</dbReference>
<dbReference type="CDD" id="cd01132">
    <property type="entry name" value="F1-ATPase_alpha_CD"/>
    <property type="match status" value="1"/>
</dbReference>
<dbReference type="FunFam" id="1.20.150.20:FF:000001">
    <property type="entry name" value="ATP synthase subunit alpha"/>
    <property type="match status" value="1"/>
</dbReference>
<dbReference type="FunFam" id="2.40.30.20:FF:000001">
    <property type="entry name" value="ATP synthase subunit alpha"/>
    <property type="match status" value="1"/>
</dbReference>
<dbReference type="FunFam" id="3.40.50.300:FF:000002">
    <property type="entry name" value="ATP synthase subunit alpha"/>
    <property type="match status" value="1"/>
</dbReference>
<dbReference type="Gene3D" id="2.40.30.20">
    <property type="match status" value="1"/>
</dbReference>
<dbReference type="Gene3D" id="1.20.150.20">
    <property type="entry name" value="ATP synthase alpha/beta chain, C-terminal domain"/>
    <property type="match status" value="1"/>
</dbReference>
<dbReference type="Gene3D" id="3.40.50.300">
    <property type="entry name" value="P-loop containing nucleotide triphosphate hydrolases"/>
    <property type="match status" value="1"/>
</dbReference>
<dbReference type="HAMAP" id="MF_01346">
    <property type="entry name" value="ATP_synth_alpha_bact"/>
    <property type="match status" value="1"/>
</dbReference>
<dbReference type="InterPro" id="IPR023366">
    <property type="entry name" value="ATP_synth_asu-like_sf"/>
</dbReference>
<dbReference type="InterPro" id="IPR000793">
    <property type="entry name" value="ATP_synth_asu_C"/>
</dbReference>
<dbReference type="InterPro" id="IPR038376">
    <property type="entry name" value="ATP_synth_asu_C_sf"/>
</dbReference>
<dbReference type="InterPro" id="IPR033732">
    <property type="entry name" value="ATP_synth_F1_a_nt-bd_dom"/>
</dbReference>
<dbReference type="InterPro" id="IPR005294">
    <property type="entry name" value="ATP_synth_F1_asu"/>
</dbReference>
<dbReference type="InterPro" id="IPR020003">
    <property type="entry name" value="ATPase_a/bsu_AS"/>
</dbReference>
<dbReference type="InterPro" id="IPR004100">
    <property type="entry name" value="ATPase_F1/V1/A1_a/bsu_N"/>
</dbReference>
<dbReference type="InterPro" id="IPR036121">
    <property type="entry name" value="ATPase_F1/V1/A1_a/bsu_N_sf"/>
</dbReference>
<dbReference type="InterPro" id="IPR000194">
    <property type="entry name" value="ATPase_F1/V1/A1_a/bsu_nucl-bd"/>
</dbReference>
<dbReference type="InterPro" id="IPR027417">
    <property type="entry name" value="P-loop_NTPase"/>
</dbReference>
<dbReference type="NCBIfam" id="TIGR00962">
    <property type="entry name" value="atpA"/>
    <property type="match status" value="1"/>
</dbReference>
<dbReference type="NCBIfam" id="NF009884">
    <property type="entry name" value="PRK13343.1"/>
    <property type="match status" value="1"/>
</dbReference>
<dbReference type="PANTHER" id="PTHR48082">
    <property type="entry name" value="ATP SYNTHASE SUBUNIT ALPHA, MITOCHONDRIAL"/>
    <property type="match status" value="1"/>
</dbReference>
<dbReference type="PANTHER" id="PTHR48082:SF2">
    <property type="entry name" value="ATP SYNTHASE SUBUNIT ALPHA, MITOCHONDRIAL"/>
    <property type="match status" value="1"/>
</dbReference>
<dbReference type="Pfam" id="PF00006">
    <property type="entry name" value="ATP-synt_ab"/>
    <property type="match status" value="1"/>
</dbReference>
<dbReference type="Pfam" id="PF00306">
    <property type="entry name" value="ATP-synt_ab_C"/>
    <property type="match status" value="1"/>
</dbReference>
<dbReference type="Pfam" id="PF02874">
    <property type="entry name" value="ATP-synt_ab_N"/>
    <property type="match status" value="1"/>
</dbReference>
<dbReference type="PIRSF" id="PIRSF039088">
    <property type="entry name" value="F_ATPase_subunit_alpha"/>
    <property type="match status" value="1"/>
</dbReference>
<dbReference type="SUPFAM" id="SSF47917">
    <property type="entry name" value="C-terminal domain of alpha and beta subunits of F1 ATP synthase"/>
    <property type="match status" value="1"/>
</dbReference>
<dbReference type="SUPFAM" id="SSF50615">
    <property type="entry name" value="N-terminal domain of alpha and beta subunits of F1 ATP synthase"/>
    <property type="match status" value="1"/>
</dbReference>
<dbReference type="SUPFAM" id="SSF52540">
    <property type="entry name" value="P-loop containing nucleoside triphosphate hydrolases"/>
    <property type="match status" value="1"/>
</dbReference>
<dbReference type="PROSITE" id="PS00152">
    <property type="entry name" value="ATPASE_ALPHA_BETA"/>
    <property type="match status" value="1"/>
</dbReference>
<gene>
    <name evidence="1" type="primary">atpA</name>
</gene>
<organism>
    <name type="scientific">Ipomoea purpurea</name>
    <name type="common">Common morning glory</name>
    <name type="synonym">Pharbitis purpurea</name>
    <dbReference type="NCBI Taxonomy" id="4121"/>
    <lineage>
        <taxon>Eukaryota</taxon>
        <taxon>Viridiplantae</taxon>
        <taxon>Streptophyta</taxon>
        <taxon>Embryophyta</taxon>
        <taxon>Tracheophyta</taxon>
        <taxon>Spermatophyta</taxon>
        <taxon>Magnoliopsida</taxon>
        <taxon>eudicotyledons</taxon>
        <taxon>Gunneridae</taxon>
        <taxon>Pentapetalae</taxon>
        <taxon>asterids</taxon>
        <taxon>lamiids</taxon>
        <taxon>Solanales</taxon>
        <taxon>Convolvulaceae</taxon>
        <taxon>Ipomoeeae</taxon>
        <taxon>Ipomoea</taxon>
    </lineage>
</organism>